<protein>
    <recommendedName>
        <fullName evidence="1">Large ribosomal subunit protein bL9</fullName>
    </recommendedName>
    <alternativeName>
        <fullName evidence="2">50S ribosomal protein L9</fullName>
    </alternativeName>
</protein>
<gene>
    <name evidence="1" type="primary">rplI</name>
    <name type="ordered locus">A2cp1_0134</name>
</gene>
<accession>B8J801</accession>
<sequence>MKLILREDVENLGKGGDLVDVKPGYGRNFLLPRGLAVTANPKNVKELEHQKAVAAAKAAKLKASAQAVAKRLSETPVTLKRKVGEQDKLYGSVTALDVAEALAARGVQLDRRSIVLDEPIKTVGEFEVPVKLHSEVAGKVKVTVEAEAE</sequence>
<organism>
    <name type="scientific">Anaeromyxobacter dehalogenans (strain 2CP-1 / ATCC BAA-258)</name>
    <dbReference type="NCBI Taxonomy" id="455488"/>
    <lineage>
        <taxon>Bacteria</taxon>
        <taxon>Pseudomonadati</taxon>
        <taxon>Myxococcota</taxon>
        <taxon>Myxococcia</taxon>
        <taxon>Myxococcales</taxon>
        <taxon>Cystobacterineae</taxon>
        <taxon>Anaeromyxobacteraceae</taxon>
        <taxon>Anaeromyxobacter</taxon>
    </lineage>
</organism>
<name>RL9_ANAD2</name>
<feature type="chain" id="PRO_1000196218" description="Large ribosomal subunit protein bL9">
    <location>
        <begin position="1"/>
        <end position="149"/>
    </location>
</feature>
<comment type="function">
    <text evidence="1">Binds to the 23S rRNA.</text>
</comment>
<comment type="similarity">
    <text evidence="1">Belongs to the bacterial ribosomal protein bL9 family.</text>
</comment>
<reference key="1">
    <citation type="submission" date="2009-01" db="EMBL/GenBank/DDBJ databases">
        <title>Complete sequence of Anaeromyxobacter dehalogenans 2CP-1.</title>
        <authorList>
            <person name="Lucas S."/>
            <person name="Copeland A."/>
            <person name="Lapidus A."/>
            <person name="Glavina del Rio T."/>
            <person name="Dalin E."/>
            <person name="Tice H."/>
            <person name="Bruce D."/>
            <person name="Goodwin L."/>
            <person name="Pitluck S."/>
            <person name="Saunders E."/>
            <person name="Brettin T."/>
            <person name="Detter J.C."/>
            <person name="Han C."/>
            <person name="Larimer F."/>
            <person name="Land M."/>
            <person name="Hauser L."/>
            <person name="Kyrpides N."/>
            <person name="Ovchinnikova G."/>
            <person name="Beliaev A.S."/>
            <person name="Richardson P."/>
        </authorList>
    </citation>
    <scope>NUCLEOTIDE SEQUENCE [LARGE SCALE GENOMIC DNA]</scope>
    <source>
        <strain>2CP-1 / ATCC BAA-258</strain>
    </source>
</reference>
<proteinExistence type="inferred from homology"/>
<dbReference type="EMBL" id="CP001359">
    <property type="protein sequence ID" value="ACL63493.1"/>
    <property type="molecule type" value="Genomic_DNA"/>
</dbReference>
<dbReference type="RefSeq" id="WP_012524202.1">
    <property type="nucleotide sequence ID" value="NC_011891.1"/>
</dbReference>
<dbReference type="SMR" id="B8J801"/>
<dbReference type="KEGG" id="acp:A2cp1_0134"/>
<dbReference type="HOGENOM" id="CLU_078938_3_0_7"/>
<dbReference type="Proteomes" id="UP000007089">
    <property type="component" value="Chromosome"/>
</dbReference>
<dbReference type="GO" id="GO:1990904">
    <property type="term" value="C:ribonucleoprotein complex"/>
    <property type="evidence" value="ECO:0007669"/>
    <property type="project" value="UniProtKB-KW"/>
</dbReference>
<dbReference type="GO" id="GO:0005840">
    <property type="term" value="C:ribosome"/>
    <property type="evidence" value="ECO:0007669"/>
    <property type="project" value="UniProtKB-KW"/>
</dbReference>
<dbReference type="GO" id="GO:0019843">
    <property type="term" value="F:rRNA binding"/>
    <property type="evidence" value="ECO:0007669"/>
    <property type="project" value="UniProtKB-UniRule"/>
</dbReference>
<dbReference type="GO" id="GO:0003735">
    <property type="term" value="F:structural constituent of ribosome"/>
    <property type="evidence" value="ECO:0007669"/>
    <property type="project" value="InterPro"/>
</dbReference>
<dbReference type="GO" id="GO:0006412">
    <property type="term" value="P:translation"/>
    <property type="evidence" value="ECO:0007669"/>
    <property type="project" value="UniProtKB-UniRule"/>
</dbReference>
<dbReference type="FunFam" id="3.10.430.100:FF:000006">
    <property type="entry name" value="50S ribosomal protein L9"/>
    <property type="match status" value="1"/>
</dbReference>
<dbReference type="FunFam" id="3.40.5.10:FF:000003">
    <property type="entry name" value="50S ribosomal protein L9"/>
    <property type="match status" value="1"/>
</dbReference>
<dbReference type="Gene3D" id="3.10.430.100">
    <property type="entry name" value="Ribosomal protein L9, C-terminal domain"/>
    <property type="match status" value="1"/>
</dbReference>
<dbReference type="Gene3D" id="3.40.5.10">
    <property type="entry name" value="Ribosomal protein L9, N-terminal domain"/>
    <property type="match status" value="1"/>
</dbReference>
<dbReference type="HAMAP" id="MF_00503">
    <property type="entry name" value="Ribosomal_bL9"/>
    <property type="match status" value="1"/>
</dbReference>
<dbReference type="InterPro" id="IPR000244">
    <property type="entry name" value="Ribosomal_bL9"/>
</dbReference>
<dbReference type="InterPro" id="IPR009027">
    <property type="entry name" value="Ribosomal_bL9/RNase_H1_N"/>
</dbReference>
<dbReference type="InterPro" id="IPR020594">
    <property type="entry name" value="Ribosomal_bL9_bac/chp"/>
</dbReference>
<dbReference type="InterPro" id="IPR020069">
    <property type="entry name" value="Ribosomal_bL9_C"/>
</dbReference>
<dbReference type="InterPro" id="IPR036791">
    <property type="entry name" value="Ribosomal_bL9_C_sf"/>
</dbReference>
<dbReference type="InterPro" id="IPR020070">
    <property type="entry name" value="Ribosomal_bL9_N"/>
</dbReference>
<dbReference type="InterPro" id="IPR036935">
    <property type="entry name" value="Ribosomal_bL9_N_sf"/>
</dbReference>
<dbReference type="NCBIfam" id="TIGR00158">
    <property type="entry name" value="L9"/>
    <property type="match status" value="1"/>
</dbReference>
<dbReference type="PANTHER" id="PTHR21368">
    <property type="entry name" value="50S RIBOSOMAL PROTEIN L9"/>
    <property type="match status" value="1"/>
</dbReference>
<dbReference type="Pfam" id="PF03948">
    <property type="entry name" value="Ribosomal_L9_C"/>
    <property type="match status" value="1"/>
</dbReference>
<dbReference type="Pfam" id="PF01281">
    <property type="entry name" value="Ribosomal_L9_N"/>
    <property type="match status" value="1"/>
</dbReference>
<dbReference type="SUPFAM" id="SSF55658">
    <property type="entry name" value="L9 N-domain-like"/>
    <property type="match status" value="1"/>
</dbReference>
<dbReference type="SUPFAM" id="SSF55653">
    <property type="entry name" value="Ribosomal protein L9 C-domain"/>
    <property type="match status" value="1"/>
</dbReference>
<dbReference type="PROSITE" id="PS00651">
    <property type="entry name" value="RIBOSOMAL_L9"/>
    <property type="match status" value="1"/>
</dbReference>
<evidence type="ECO:0000255" key="1">
    <source>
        <dbReference type="HAMAP-Rule" id="MF_00503"/>
    </source>
</evidence>
<evidence type="ECO:0000305" key="2"/>
<keyword id="KW-0687">Ribonucleoprotein</keyword>
<keyword id="KW-0689">Ribosomal protein</keyword>
<keyword id="KW-0694">RNA-binding</keyword>
<keyword id="KW-0699">rRNA-binding</keyword>